<dbReference type="EC" id="1.1.1.23"/>
<dbReference type="EMBL" id="U82227">
    <property type="protein sequence ID" value="AAB63023.1"/>
    <property type="molecule type" value="Genomic_DNA"/>
</dbReference>
<dbReference type="EMBL" id="Y18930">
    <property type="protein sequence ID" value="CAB57701.1"/>
    <property type="molecule type" value="Genomic_DNA"/>
</dbReference>
<dbReference type="EMBL" id="AE006641">
    <property type="protein sequence ID" value="AAK40909.1"/>
    <property type="molecule type" value="Genomic_DNA"/>
</dbReference>
<dbReference type="PIR" id="F90206">
    <property type="entry name" value="F90206"/>
</dbReference>
<dbReference type="RefSeq" id="WP_009991117.1">
    <property type="nucleotide sequence ID" value="NC_002754.1"/>
</dbReference>
<dbReference type="SMR" id="O33775"/>
<dbReference type="FunCoup" id="O33775">
    <property type="interactions" value="261"/>
</dbReference>
<dbReference type="STRING" id="273057.SSO0599"/>
<dbReference type="PaxDb" id="273057-SSO0599"/>
<dbReference type="EnsemblBacteria" id="AAK40909">
    <property type="protein sequence ID" value="AAK40909"/>
    <property type="gene ID" value="SSO0599"/>
</dbReference>
<dbReference type="GeneID" id="44129599"/>
<dbReference type="KEGG" id="sso:SSO0599"/>
<dbReference type="PATRIC" id="fig|273057.12.peg.605"/>
<dbReference type="eggNOG" id="arCOG04352">
    <property type="taxonomic scope" value="Archaea"/>
</dbReference>
<dbReference type="HOGENOM" id="CLU_006732_3_0_2"/>
<dbReference type="InParanoid" id="O33775"/>
<dbReference type="PhylomeDB" id="O33775"/>
<dbReference type="UniPathway" id="UPA00031">
    <property type="reaction ID" value="UER00014"/>
</dbReference>
<dbReference type="Proteomes" id="UP000001974">
    <property type="component" value="Chromosome"/>
</dbReference>
<dbReference type="GO" id="GO:0005737">
    <property type="term" value="C:cytoplasm"/>
    <property type="evidence" value="ECO:0000318"/>
    <property type="project" value="GO_Central"/>
</dbReference>
<dbReference type="GO" id="GO:0004399">
    <property type="term" value="F:histidinol dehydrogenase activity"/>
    <property type="evidence" value="ECO:0000318"/>
    <property type="project" value="GO_Central"/>
</dbReference>
<dbReference type="GO" id="GO:0051287">
    <property type="term" value="F:NAD binding"/>
    <property type="evidence" value="ECO:0007669"/>
    <property type="project" value="InterPro"/>
</dbReference>
<dbReference type="GO" id="GO:0008270">
    <property type="term" value="F:zinc ion binding"/>
    <property type="evidence" value="ECO:0007669"/>
    <property type="project" value="UniProtKB-UniRule"/>
</dbReference>
<dbReference type="GO" id="GO:0000105">
    <property type="term" value="P:L-histidine biosynthetic process"/>
    <property type="evidence" value="ECO:0000318"/>
    <property type="project" value="GO_Central"/>
</dbReference>
<dbReference type="CDD" id="cd06572">
    <property type="entry name" value="Histidinol_dh"/>
    <property type="match status" value="1"/>
</dbReference>
<dbReference type="FunFam" id="3.40.50.1980:FF:000001">
    <property type="entry name" value="Histidinol dehydrogenase"/>
    <property type="match status" value="1"/>
</dbReference>
<dbReference type="FunFam" id="3.40.50.1980:FF:000026">
    <property type="entry name" value="Histidinol dehydrogenase"/>
    <property type="match status" value="1"/>
</dbReference>
<dbReference type="Gene3D" id="1.20.5.1300">
    <property type="match status" value="1"/>
</dbReference>
<dbReference type="Gene3D" id="3.40.50.1980">
    <property type="entry name" value="Nitrogenase molybdenum iron protein domain"/>
    <property type="match status" value="2"/>
</dbReference>
<dbReference type="HAMAP" id="MF_01024">
    <property type="entry name" value="HisD"/>
    <property type="match status" value="1"/>
</dbReference>
<dbReference type="InterPro" id="IPR016161">
    <property type="entry name" value="Ald_DH/histidinol_DH"/>
</dbReference>
<dbReference type="InterPro" id="IPR001692">
    <property type="entry name" value="Histidinol_DH_CS"/>
</dbReference>
<dbReference type="InterPro" id="IPR022695">
    <property type="entry name" value="Histidinol_DH_monofunct"/>
</dbReference>
<dbReference type="InterPro" id="IPR012131">
    <property type="entry name" value="Hstdl_DH"/>
</dbReference>
<dbReference type="NCBIfam" id="TIGR00069">
    <property type="entry name" value="hisD"/>
    <property type="match status" value="1"/>
</dbReference>
<dbReference type="PANTHER" id="PTHR21256:SF2">
    <property type="entry name" value="HISTIDINE BIOSYNTHESIS TRIFUNCTIONAL PROTEIN"/>
    <property type="match status" value="1"/>
</dbReference>
<dbReference type="PANTHER" id="PTHR21256">
    <property type="entry name" value="HISTIDINOL DEHYDROGENASE HDH"/>
    <property type="match status" value="1"/>
</dbReference>
<dbReference type="Pfam" id="PF00815">
    <property type="entry name" value="Histidinol_dh"/>
    <property type="match status" value="1"/>
</dbReference>
<dbReference type="PIRSF" id="PIRSF000099">
    <property type="entry name" value="Histidinol_dh"/>
    <property type="match status" value="1"/>
</dbReference>
<dbReference type="PRINTS" id="PR00083">
    <property type="entry name" value="HOLDHDRGNASE"/>
</dbReference>
<dbReference type="SUPFAM" id="SSF53720">
    <property type="entry name" value="ALDH-like"/>
    <property type="match status" value="1"/>
</dbReference>
<dbReference type="PROSITE" id="PS00611">
    <property type="entry name" value="HISOL_DEHYDROGENASE"/>
    <property type="match status" value="1"/>
</dbReference>
<feature type="chain" id="PRO_0000135906" description="Histidinol dehydrogenase">
    <location>
        <begin position="1"/>
        <end position="398"/>
    </location>
</feature>
<feature type="active site" description="Proton acceptor" evidence="1">
    <location>
        <position position="298"/>
    </location>
</feature>
<feature type="active site" description="Proton acceptor" evidence="1">
    <location>
        <position position="299"/>
    </location>
</feature>
<feature type="binding site" evidence="1">
    <location>
        <position position="114"/>
    </location>
    <ligand>
        <name>NAD(+)</name>
        <dbReference type="ChEBI" id="CHEBI:57540"/>
    </ligand>
</feature>
<feature type="binding site" evidence="1">
    <location>
        <position position="176"/>
    </location>
    <ligand>
        <name>NAD(+)</name>
        <dbReference type="ChEBI" id="CHEBI:57540"/>
    </ligand>
</feature>
<feature type="binding site" evidence="1">
    <location>
        <position position="199"/>
    </location>
    <ligand>
        <name>NAD(+)</name>
        <dbReference type="ChEBI" id="CHEBI:57540"/>
    </ligand>
</feature>
<feature type="binding site" evidence="1">
    <location>
        <position position="222"/>
    </location>
    <ligand>
        <name>substrate</name>
    </ligand>
</feature>
<feature type="binding site" evidence="1">
    <location>
        <position position="244"/>
    </location>
    <ligand>
        <name>substrate</name>
    </ligand>
</feature>
<feature type="binding site" evidence="1">
    <location>
        <position position="244"/>
    </location>
    <ligand>
        <name>Zn(2+)</name>
        <dbReference type="ChEBI" id="CHEBI:29105"/>
    </ligand>
</feature>
<feature type="binding site" evidence="1">
    <location>
        <position position="247"/>
    </location>
    <ligand>
        <name>substrate</name>
    </ligand>
</feature>
<feature type="binding site" evidence="1">
    <location>
        <position position="247"/>
    </location>
    <ligand>
        <name>Zn(2+)</name>
        <dbReference type="ChEBI" id="CHEBI:29105"/>
    </ligand>
</feature>
<feature type="binding site" evidence="1">
    <location>
        <position position="299"/>
    </location>
    <ligand>
        <name>substrate</name>
    </ligand>
</feature>
<feature type="binding site" evidence="1">
    <location>
        <position position="331"/>
    </location>
    <ligand>
        <name>substrate</name>
    </ligand>
</feature>
<feature type="binding site" evidence="1">
    <location>
        <position position="331"/>
    </location>
    <ligand>
        <name>Zn(2+)</name>
        <dbReference type="ChEBI" id="CHEBI:29105"/>
    </ligand>
</feature>
<feature type="binding site" evidence="1">
    <location>
        <position position="384"/>
    </location>
    <ligand>
        <name>substrate</name>
    </ligand>
</feature>
<feature type="binding site" evidence="1">
    <location>
        <position position="389"/>
    </location>
    <ligand>
        <name>substrate</name>
    </ligand>
</feature>
<feature type="binding site" evidence="1">
    <location>
        <position position="389"/>
    </location>
    <ligand>
        <name>Zn(2+)</name>
        <dbReference type="ChEBI" id="CHEBI:29105"/>
    </ligand>
</feature>
<protein>
    <recommendedName>
        <fullName>Histidinol dehydrogenase</fullName>
        <shortName>HDH</shortName>
        <ecNumber>1.1.1.23</ecNumber>
    </recommendedName>
</protein>
<keyword id="KW-0028">Amino-acid biosynthesis</keyword>
<keyword id="KW-0368">Histidine biosynthesis</keyword>
<keyword id="KW-0479">Metal-binding</keyword>
<keyword id="KW-0520">NAD</keyword>
<keyword id="KW-0560">Oxidoreductase</keyword>
<keyword id="KW-1185">Reference proteome</keyword>
<keyword id="KW-0862">Zinc</keyword>
<organism>
    <name type="scientific">Saccharolobus solfataricus (strain ATCC 35092 / DSM 1617 / JCM 11322 / P2)</name>
    <name type="common">Sulfolobus solfataricus</name>
    <dbReference type="NCBI Taxonomy" id="273057"/>
    <lineage>
        <taxon>Archaea</taxon>
        <taxon>Thermoproteota</taxon>
        <taxon>Thermoprotei</taxon>
        <taxon>Sulfolobales</taxon>
        <taxon>Sulfolobaceae</taxon>
        <taxon>Saccharolobus</taxon>
    </lineage>
</organism>
<reference key="1">
    <citation type="journal article" date="1997" name="J. Bacteriol.">
        <title>Evolutionary analysis of the hisCGABdFDEHI gene cluster from the archaeon Sulfolobus solfataricus P2.</title>
        <authorList>
            <person name="Charlebois R.L."/>
            <person name="Sensen C.W."/>
            <person name="Doolittle W.F."/>
            <person name="Brown J.R."/>
        </authorList>
    </citation>
    <scope>NUCLEOTIDE SEQUENCE [GENOMIC DNA]</scope>
    <source>
        <strain>ATCC 35092 / DSM 1617 / JCM 11322 / P2</strain>
    </source>
</reference>
<reference key="2">
    <citation type="journal article" date="2000" name="Genome">
        <title>Gene content and organization of a 281-kbp contig from the genome of the extremely thermophilic archaeon, Sulfolobus solfataricus P2.</title>
        <authorList>
            <person name="Charlebois R.L."/>
            <person name="Singh R.K."/>
            <person name="Chan-Weiher C.C.-Y."/>
            <person name="Allard G."/>
            <person name="Chow C."/>
            <person name="Confalonieri F."/>
            <person name="Curtis B."/>
            <person name="Duguet M."/>
            <person name="Erauso G."/>
            <person name="Faguy D."/>
            <person name="Gaasterland T."/>
            <person name="Garrett R.A."/>
            <person name="Gordon P."/>
            <person name="Jeffries A.C."/>
            <person name="Kozera C."/>
            <person name="Kushwaha N."/>
            <person name="Lafleur E."/>
            <person name="Medina N."/>
            <person name="Peng X."/>
            <person name="Penny S.L."/>
            <person name="She Q."/>
            <person name="St Jean A."/>
            <person name="van der Oost J."/>
            <person name="Young F."/>
            <person name="Zivanovic Y."/>
            <person name="Doolittle W.F."/>
            <person name="Ragan M.A."/>
            <person name="Sensen C.W."/>
        </authorList>
    </citation>
    <scope>NUCLEOTIDE SEQUENCE [LARGE SCALE GENOMIC DNA]</scope>
    <source>
        <strain>ATCC 35092 / DSM 1617 / JCM 11322 / P2</strain>
    </source>
</reference>
<reference key="3">
    <citation type="journal article" date="2001" name="Proc. Natl. Acad. Sci. U.S.A.">
        <title>The complete genome of the crenarchaeon Sulfolobus solfataricus P2.</title>
        <authorList>
            <person name="She Q."/>
            <person name="Singh R.K."/>
            <person name="Confalonieri F."/>
            <person name="Zivanovic Y."/>
            <person name="Allard G."/>
            <person name="Awayez M.J."/>
            <person name="Chan-Weiher C.C.-Y."/>
            <person name="Clausen I.G."/>
            <person name="Curtis B.A."/>
            <person name="De Moors A."/>
            <person name="Erauso G."/>
            <person name="Fletcher C."/>
            <person name="Gordon P.M.K."/>
            <person name="Heikamp-de Jong I."/>
            <person name="Jeffries A.C."/>
            <person name="Kozera C.J."/>
            <person name="Medina N."/>
            <person name="Peng X."/>
            <person name="Thi-Ngoc H.P."/>
            <person name="Redder P."/>
            <person name="Schenk M.E."/>
            <person name="Theriault C."/>
            <person name="Tolstrup N."/>
            <person name="Charlebois R.L."/>
            <person name="Doolittle W.F."/>
            <person name="Duguet M."/>
            <person name="Gaasterland T."/>
            <person name="Garrett R.A."/>
            <person name="Ragan M.A."/>
            <person name="Sensen C.W."/>
            <person name="Van der Oost J."/>
        </authorList>
    </citation>
    <scope>NUCLEOTIDE SEQUENCE [LARGE SCALE GENOMIC DNA]</scope>
    <source>
        <strain>ATCC 35092 / DSM 1617 / JCM 11322 / P2</strain>
    </source>
</reference>
<comment type="function">
    <text evidence="1">Catalyzes the sequential NAD-dependent oxidations of L-histidinol to L-histidinaldehyde and then to L-histidine.</text>
</comment>
<comment type="catalytic activity">
    <reaction>
        <text>L-histidinol + 2 NAD(+) + H2O = L-histidine + 2 NADH + 3 H(+)</text>
        <dbReference type="Rhea" id="RHEA:20641"/>
        <dbReference type="ChEBI" id="CHEBI:15377"/>
        <dbReference type="ChEBI" id="CHEBI:15378"/>
        <dbReference type="ChEBI" id="CHEBI:57540"/>
        <dbReference type="ChEBI" id="CHEBI:57595"/>
        <dbReference type="ChEBI" id="CHEBI:57699"/>
        <dbReference type="ChEBI" id="CHEBI:57945"/>
        <dbReference type="EC" id="1.1.1.23"/>
    </reaction>
</comment>
<comment type="cofactor">
    <cofactor evidence="1">
        <name>Zn(2+)</name>
        <dbReference type="ChEBI" id="CHEBI:29105"/>
    </cofactor>
    <text evidence="1">Binds 1 zinc ion per subunit.</text>
</comment>
<comment type="pathway">
    <text>Amino-acid biosynthesis; L-histidine biosynthesis; L-histidine from 5-phospho-alpha-D-ribose 1-diphosphate: step 9/9.</text>
</comment>
<comment type="similarity">
    <text evidence="2">Belongs to the histidinol dehydrogenase family.</text>
</comment>
<gene>
    <name type="primary">hisD</name>
    <name type="ordered locus">SSO0599</name>
    <name type="ORF">C08_051</name>
</gene>
<proteinExistence type="inferred from homology"/>
<sequence>MISYSLPNERPNDFSRVIPVVKDIIESVKTKGDNALYELTEKLDKVKIDNIKAREEELKTQASKLDPKVKQAIDTAYEQLKAFHEMLVPPNIGGGYQGISFGVIWRSIEKIGIYVPSGKYSYPSTLLMAGIPAKVAKVKEIYVASPPTQEGTVNPALAYVAIKLGVNEVYKIGGAQAIAALAFGTESVKKVYKIVGPGNVYVQAAKYLVSSVVGIDGIEGPTELVIIADETAKAEYVALDMKAQAEHGPDTYIVLLSNDDELIRRVEEKIKNDKKIYYIIKTKNLDEAIEIANKIAPEHLSLYVKDAYTLMDKIVNAGAISLGNTPPAIIDYVAGPNHILPTNGWAKIRGGITVYDFIKPTMYANVRDINKQLLEASISLANYEGFIIHGKSIGARYE</sequence>
<accession>O33775</accession>
<evidence type="ECO:0000250" key="1"/>
<evidence type="ECO:0000305" key="2"/>
<name>HISX_SACS2</name>